<name>KEX1_TUBMM</name>
<keyword id="KW-0053">Apoptosis</keyword>
<keyword id="KW-0121">Carboxypeptidase</keyword>
<keyword id="KW-0325">Glycoprotein</keyword>
<keyword id="KW-0333">Golgi apparatus</keyword>
<keyword id="KW-0378">Hydrolase</keyword>
<keyword id="KW-0472">Membrane</keyword>
<keyword id="KW-0645">Protease</keyword>
<keyword id="KW-1185">Reference proteome</keyword>
<keyword id="KW-0732">Signal</keyword>
<keyword id="KW-0812">Transmembrane</keyword>
<keyword id="KW-1133">Transmembrane helix</keyword>
<gene>
    <name type="primary">KEX1</name>
    <name type="ORF">GSTUM_00004029001</name>
</gene>
<reference key="1">
    <citation type="journal article" date="2010" name="Nature">
        <title>Perigord black truffle genome uncovers evolutionary origins and mechanisms of symbiosis.</title>
        <authorList>
            <person name="Martin F."/>
            <person name="Kohler A."/>
            <person name="Murat C."/>
            <person name="Balestrini R."/>
            <person name="Coutinho P.M."/>
            <person name="Jaillon O."/>
            <person name="Montanini B."/>
            <person name="Morin E."/>
            <person name="Noel B."/>
            <person name="Percudani R."/>
            <person name="Porcel B."/>
            <person name="Rubini A."/>
            <person name="Amicucci A."/>
            <person name="Amselem J."/>
            <person name="Anthouard V."/>
            <person name="Arcioni S."/>
            <person name="Artiguenave F."/>
            <person name="Aury J.M."/>
            <person name="Ballario P."/>
            <person name="Bolchi A."/>
            <person name="Brenna A."/>
            <person name="Brun A."/>
            <person name="Buee M."/>
            <person name="Cantarel B."/>
            <person name="Chevalier G."/>
            <person name="Couloux A."/>
            <person name="Da Silva C."/>
            <person name="Denoeud F."/>
            <person name="Duplessis S."/>
            <person name="Ghignone S."/>
            <person name="Hilselberger B."/>
            <person name="Iotti M."/>
            <person name="Marcais B."/>
            <person name="Mello A."/>
            <person name="Miranda M."/>
            <person name="Pacioni G."/>
            <person name="Quesneville H."/>
            <person name="Riccioni C."/>
            <person name="Ruotolo R."/>
            <person name="Splivallo R."/>
            <person name="Stocchi V."/>
            <person name="Tisserant E."/>
            <person name="Viscomi A.R."/>
            <person name="Zambonelli A."/>
            <person name="Zampieri E."/>
            <person name="Henrissat B."/>
            <person name="Lebrun M.H."/>
            <person name="Paolocci F."/>
            <person name="Bonfante P."/>
            <person name="Ottonello S."/>
            <person name="Wincker P."/>
        </authorList>
    </citation>
    <scope>NUCLEOTIDE SEQUENCE [LARGE SCALE GENOMIC DNA]</scope>
    <source>
        <strain>Mel28</strain>
    </source>
</reference>
<dbReference type="EC" id="3.4.16.6"/>
<dbReference type="EMBL" id="FN429986">
    <property type="protein sequence ID" value="CAZ79354.1"/>
    <property type="molecule type" value="Genomic_DNA"/>
</dbReference>
<dbReference type="RefSeq" id="XP_002835233.1">
    <property type="nucleotide sequence ID" value="XM_002835187.1"/>
</dbReference>
<dbReference type="SMR" id="D5G4B1"/>
<dbReference type="FunCoup" id="D5G4B1">
    <property type="interactions" value="109"/>
</dbReference>
<dbReference type="STRING" id="656061.D5G4B1"/>
<dbReference type="ESTHER" id="tubmm-kex1">
    <property type="family name" value="Carboxypeptidase_S10"/>
</dbReference>
<dbReference type="MEROPS" id="S10.007"/>
<dbReference type="GlyCosmos" id="D5G4B1">
    <property type="glycosylation" value="3 sites, No reported glycans"/>
</dbReference>
<dbReference type="EnsemblFungi" id="CAZ79354">
    <property type="protein sequence ID" value="CAZ79354"/>
    <property type="gene ID" value="GSTUM_00004029001"/>
</dbReference>
<dbReference type="GeneID" id="9184979"/>
<dbReference type="KEGG" id="tml:GSTUM_00004029001"/>
<dbReference type="eggNOG" id="KOG1282">
    <property type="taxonomic scope" value="Eukaryota"/>
</dbReference>
<dbReference type="HOGENOM" id="CLU_008523_11_0_1"/>
<dbReference type="InParanoid" id="D5G4B1"/>
<dbReference type="OMA" id="EMADQFV"/>
<dbReference type="Proteomes" id="UP000006911">
    <property type="component" value="Unassembled WGS sequence"/>
</dbReference>
<dbReference type="GO" id="GO:0016020">
    <property type="term" value="C:membrane"/>
    <property type="evidence" value="ECO:0007669"/>
    <property type="project" value="UniProtKB-KW"/>
</dbReference>
<dbReference type="GO" id="GO:0005802">
    <property type="term" value="C:trans-Golgi network"/>
    <property type="evidence" value="ECO:0007669"/>
    <property type="project" value="TreeGrafter"/>
</dbReference>
<dbReference type="GO" id="GO:0004185">
    <property type="term" value="F:serine-type carboxypeptidase activity"/>
    <property type="evidence" value="ECO:0007669"/>
    <property type="project" value="UniProtKB-EC"/>
</dbReference>
<dbReference type="GO" id="GO:0006915">
    <property type="term" value="P:apoptotic process"/>
    <property type="evidence" value="ECO:0007669"/>
    <property type="project" value="UniProtKB-KW"/>
</dbReference>
<dbReference type="GO" id="GO:0006508">
    <property type="term" value="P:proteolysis"/>
    <property type="evidence" value="ECO:0007669"/>
    <property type="project" value="UniProtKB-KW"/>
</dbReference>
<dbReference type="FunFam" id="3.40.50.1820:FF:000121">
    <property type="entry name" value="Carboxypeptidase D"/>
    <property type="match status" value="1"/>
</dbReference>
<dbReference type="Gene3D" id="3.40.50.1820">
    <property type="entry name" value="alpha/beta hydrolase"/>
    <property type="match status" value="1"/>
</dbReference>
<dbReference type="InterPro" id="IPR029058">
    <property type="entry name" value="AB_hydrolase_fold"/>
</dbReference>
<dbReference type="InterPro" id="IPR001563">
    <property type="entry name" value="Peptidase_S10"/>
</dbReference>
<dbReference type="InterPro" id="IPR033124">
    <property type="entry name" value="Ser_caboxypep_his_AS"/>
</dbReference>
<dbReference type="InterPro" id="IPR018202">
    <property type="entry name" value="Ser_caboxypep_ser_AS"/>
</dbReference>
<dbReference type="PANTHER" id="PTHR11802:SF190">
    <property type="entry name" value="PHEROMONE-PROCESSING CARBOXYPEPTIDASE KEX1"/>
    <property type="match status" value="1"/>
</dbReference>
<dbReference type="PANTHER" id="PTHR11802">
    <property type="entry name" value="SERINE PROTEASE FAMILY S10 SERINE CARBOXYPEPTIDASE"/>
    <property type="match status" value="1"/>
</dbReference>
<dbReference type="Pfam" id="PF00450">
    <property type="entry name" value="Peptidase_S10"/>
    <property type="match status" value="1"/>
</dbReference>
<dbReference type="PRINTS" id="PR00724">
    <property type="entry name" value="CRBOXYPTASEC"/>
</dbReference>
<dbReference type="SUPFAM" id="SSF53474">
    <property type="entry name" value="alpha/beta-Hydrolases"/>
    <property type="match status" value="1"/>
</dbReference>
<dbReference type="PROSITE" id="PS00560">
    <property type="entry name" value="CARBOXYPEPT_SER_HIS"/>
    <property type="match status" value="1"/>
</dbReference>
<dbReference type="PROSITE" id="PS00131">
    <property type="entry name" value="CARBOXYPEPT_SER_SER"/>
    <property type="match status" value="1"/>
</dbReference>
<organism>
    <name type="scientific">Tuber melanosporum (strain Mel28)</name>
    <name type="common">Perigord black truffle</name>
    <dbReference type="NCBI Taxonomy" id="656061"/>
    <lineage>
        <taxon>Eukaryota</taxon>
        <taxon>Fungi</taxon>
        <taxon>Dikarya</taxon>
        <taxon>Ascomycota</taxon>
        <taxon>Pezizomycotina</taxon>
        <taxon>Pezizomycetes</taxon>
        <taxon>Pezizales</taxon>
        <taxon>Tuberaceae</taxon>
        <taxon>Tuber</taxon>
    </lineage>
</organism>
<sequence>MRLAASSLLLGAAASLLSSATALAVRSDNPGSSAGYFVRSLPGQPPGPLIKMHAGHIEVDHATNGNLFFWHFQNKHIANRQRTVIWLNGGPGCSSMDGALMEVGPYRLKDDHTLAENEGSWHEFANLLFVDQPVGTGFSYVNTDSYLTELTQMSDHFIKFLTKFFELFPEYESDDIYLSGESYAGQHIPYIADAILKRNADASIKWNVKGLLIGNGWIDPSNQYLSYLPFAYESGIVEKGSPIADQIEKQVAVCVKTIAEKGRHHVDLNQCEQILQDILAKTKHHKDGKEVCWNMYDVRLEDTYPSCGMNWPPDLSSLTPYLRRKDVLQALHVNPDKTAGWTECAGAVSSSFRALKSKPSVELLPDLLKEMPILLFSGNKDLICNHIGTEELIHNMEWNGGKGFELDGAPGTWAPREDWVFEDEPAGIYQSARNLTYVLIYNSSHMVPFDFSRRTRDMLDRFMEVDIGKIGGTPADSVIGGEKAPITSVGGTPNSTAAVEKEKERVDQARWAAYYRSGEVALVLVASAAAIWGIFIWRQRHRRRGRRGSYAGLGGLKMTGGSRDRLADGRESFDEDELRDLTVASPMFERDRDLEAAEARRYSLGGVSDDESDDEGRIEKRPSVG</sequence>
<evidence type="ECO:0000250" key="1"/>
<evidence type="ECO:0000255" key="2"/>
<evidence type="ECO:0000256" key="3">
    <source>
        <dbReference type="SAM" id="MobiDB-lite"/>
    </source>
</evidence>
<evidence type="ECO:0000305" key="4"/>
<feature type="signal peptide" evidence="2">
    <location>
        <begin position="1"/>
        <end position="24"/>
    </location>
</feature>
<feature type="chain" id="PRO_0000411948" description="Pheromone-processing carboxypeptidase KEX1">
    <location>
        <begin position="25"/>
        <end position="625"/>
    </location>
</feature>
<feature type="topological domain" description="Lumenal" evidence="2">
    <location>
        <begin position="25"/>
        <end position="516"/>
    </location>
</feature>
<feature type="transmembrane region" description="Helical" evidence="2">
    <location>
        <begin position="517"/>
        <end position="537"/>
    </location>
</feature>
<feature type="topological domain" description="Cytoplasmic" evidence="2">
    <location>
        <begin position="538"/>
        <end position="625"/>
    </location>
</feature>
<feature type="region of interest" description="Disordered" evidence="3">
    <location>
        <begin position="601"/>
        <end position="625"/>
    </location>
</feature>
<feature type="compositionally biased region" description="Basic and acidic residues" evidence="3">
    <location>
        <begin position="615"/>
        <end position="625"/>
    </location>
</feature>
<feature type="active site" evidence="1">
    <location>
        <position position="182"/>
    </location>
</feature>
<feature type="active site" evidence="1">
    <location>
        <position position="381"/>
    </location>
</feature>
<feature type="active site" evidence="1">
    <location>
        <position position="445"/>
    </location>
</feature>
<feature type="glycosylation site" description="N-linked (GlcNAc...) asparagine" evidence="2">
    <location>
        <position position="434"/>
    </location>
</feature>
<feature type="glycosylation site" description="N-linked (GlcNAc...) asparagine" evidence="2">
    <location>
        <position position="442"/>
    </location>
</feature>
<feature type="glycosylation site" description="N-linked (GlcNAc...) asparagine" evidence="2">
    <location>
        <position position="494"/>
    </location>
</feature>
<accession>D5G4B1</accession>
<proteinExistence type="inferred from homology"/>
<protein>
    <recommendedName>
        <fullName>Pheromone-processing carboxypeptidase KEX1</fullName>
        <ecNumber>3.4.16.6</ecNumber>
    </recommendedName>
    <alternativeName>
        <fullName>Carboxypeptidase D</fullName>
    </alternativeName>
</protein>
<comment type="function">
    <text evidence="1">Protease with a carboxypeptidase B-like function involved in the C-terminal processing of the lysine and arginine residues from protein precursors. Promotes cell fusion and is involved in the programmed cell death (By similarity).</text>
</comment>
<comment type="catalytic activity">
    <reaction>
        <text>Preferential release of a C-terminal arginine or lysine residue.</text>
        <dbReference type="EC" id="3.4.16.6"/>
    </reaction>
</comment>
<comment type="subcellular location">
    <subcellularLocation>
        <location evidence="1">Golgi apparatus</location>
        <location evidence="1">trans-Golgi network membrane</location>
        <topology evidence="1">Single-pass type I membrane protein</topology>
    </subcellularLocation>
</comment>
<comment type="similarity">
    <text evidence="4">Belongs to the peptidase S10 family.</text>
</comment>